<feature type="peptide" id="PRO_0000044427" description="Neurokinin-A">
    <location>
        <begin position="1"/>
        <end position="10"/>
    </location>
</feature>
<feature type="modified residue" description="Methionine amide" evidence="1">
    <location>
        <position position="10"/>
    </location>
</feature>
<proteinExistence type="evidence at protein level"/>
<comment type="function">
    <text>Tachykinins are active peptides which excite neurons, evoke behavioral responses, are potent vasodilators and secretagogues, and contract (directly or indirectly) many smooth muscles.</text>
</comment>
<comment type="subcellular location">
    <subcellularLocation>
        <location>Secreted</location>
    </subcellularLocation>
</comment>
<comment type="similarity">
    <text evidence="2">Belongs to the tachykinin family.</text>
</comment>
<protein>
    <recommendedName>
        <fullName>Neurokinin-A</fullName>
    </recommendedName>
    <alternativeName>
        <fullName>Neuromedin-L</fullName>
    </alternativeName>
    <alternativeName>
        <fullName>Substance K</fullName>
    </alternativeName>
</protein>
<name>TKNB_ONCMY</name>
<accession>P69143</accession>
<accession>P28500</accession>
<evidence type="ECO:0000250" key="1"/>
<evidence type="ECO:0000305" key="2"/>
<organism>
    <name type="scientific">Oncorhynchus mykiss</name>
    <name type="common">Rainbow trout</name>
    <name type="synonym">Salmo gairdneri</name>
    <dbReference type="NCBI Taxonomy" id="8022"/>
    <lineage>
        <taxon>Eukaryota</taxon>
        <taxon>Metazoa</taxon>
        <taxon>Chordata</taxon>
        <taxon>Craniata</taxon>
        <taxon>Vertebrata</taxon>
        <taxon>Euteleostomi</taxon>
        <taxon>Actinopterygii</taxon>
        <taxon>Neopterygii</taxon>
        <taxon>Teleostei</taxon>
        <taxon>Protacanthopterygii</taxon>
        <taxon>Salmoniformes</taxon>
        <taxon>Salmonidae</taxon>
        <taxon>Salmoninae</taxon>
        <taxon>Oncorhynchus</taxon>
    </lineage>
</organism>
<dbReference type="PIR" id="S23307">
    <property type="entry name" value="S23307"/>
</dbReference>
<dbReference type="Proteomes" id="UP000694395">
    <property type="component" value="Unplaced"/>
</dbReference>
<dbReference type="GO" id="GO:0005576">
    <property type="term" value="C:extracellular region"/>
    <property type="evidence" value="ECO:0007669"/>
    <property type="project" value="UniProtKB-SubCell"/>
</dbReference>
<dbReference type="GO" id="GO:0007218">
    <property type="term" value="P:neuropeptide signaling pathway"/>
    <property type="evidence" value="ECO:0007669"/>
    <property type="project" value="UniProtKB-KW"/>
</dbReference>
<dbReference type="InterPro" id="IPR013055">
    <property type="entry name" value="Tachy_Neuro_lke_CS"/>
</dbReference>
<dbReference type="PROSITE" id="PS00267">
    <property type="entry name" value="TACHYKININ"/>
    <property type="match status" value="1"/>
</dbReference>
<keyword id="KW-0027">Amidation</keyword>
<keyword id="KW-0903">Direct protein sequencing</keyword>
<keyword id="KW-0527">Neuropeptide</keyword>
<keyword id="KW-0964">Secreted</keyword>
<sequence length="10" mass="1145">HKINSFVGLM</sequence>
<reference key="1">
    <citation type="journal article" date="1992" name="Eur. J. Biochem.">
        <title>Substance-P-related and neurokinin-A-related peptides from the brain of the cod and trout.</title>
        <authorList>
            <person name="Jensen J."/>
            <person name="Conlon J.M."/>
        </authorList>
    </citation>
    <scope>PROTEIN SEQUENCE</scope>
    <source>
        <tissue>Brain</tissue>
    </source>
</reference>